<sequence length="529" mass="57954">MDATALWQRYLEWLYYHPELGIYLDVSRMRFDSAFVETLAPQFAKAFADMAALEAGAIANPDEHRQVGHYWLRAPEIAPTEELKTEIVETLEQIETFAAKVHHGQIHPTRGGLFTDIISVGIGGSALGPQFVSQSLAPERPPLDIHFLDNTDPDGIDRVLNRVEPRLSTTLVIIISKSGGTPETRNGMLEVEKRFKDAGLNFAEHAVAITSYGSKLAQIAESAGWLAIFPMHDWVGGRTSELSAVGLLPAALQGIPIREMLHGAKLMDEATRVPDLKTNPAALLALSWYCAGEGKGKKDMVVLPYKDSLQLFSRYLQQLVMESLGKEKDLQGQVVHQGIAVYGNKGTTDQHAYVQQLREGLNNFFLTFIEVLQDRQGASVEVEPGITSGDYLSGLLLGTRQALYEKQRDSITLTLPQVTPLTVGALIALYERTVGLYGFLINVNAYHQPGVEAGKKAAAANLALQKQLLRILSQEPQPISLMTLAAKVGAPEQTETIYLLLRHLAANGRGVSLQGPPEQPDRLLVRATA</sequence>
<feature type="chain" id="PRO_1000135523" description="Glucose-6-phosphate isomerase">
    <location>
        <begin position="1"/>
        <end position="529"/>
    </location>
</feature>
<feature type="active site" description="Proton donor" evidence="1">
    <location>
        <position position="322"/>
    </location>
</feature>
<feature type="active site" evidence="1">
    <location>
        <position position="351"/>
    </location>
</feature>
<feature type="active site" evidence="1">
    <location>
        <position position="455"/>
    </location>
</feature>
<organism>
    <name type="scientific">Cyanothece sp. (strain PCC 7425 / ATCC 29141)</name>
    <dbReference type="NCBI Taxonomy" id="395961"/>
    <lineage>
        <taxon>Bacteria</taxon>
        <taxon>Bacillati</taxon>
        <taxon>Cyanobacteriota</taxon>
        <taxon>Cyanophyceae</taxon>
        <taxon>Gomontiellales</taxon>
        <taxon>Cyanothecaceae</taxon>
        <taxon>Cyanothece</taxon>
    </lineage>
</organism>
<proteinExistence type="inferred from homology"/>
<comment type="function">
    <text evidence="1">Catalyzes the reversible isomerization of glucose-6-phosphate to fructose-6-phosphate.</text>
</comment>
<comment type="catalytic activity">
    <reaction evidence="1">
        <text>alpha-D-glucose 6-phosphate = beta-D-fructose 6-phosphate</text>
        <dbReference type="Rhea" id="RHEA:11816"/>
        <dbReference type="ChEBI" id="CHEBI:57634"/>
        <dbReference type="ChEBI" id="CHEBI:58225"/>
        <dbReference type="EC" id="5.3.1.9"/>
    </reaction>
</comment>
<comment type="pathway">
    <text evidence="1">Carbohydrate biosynthesis; gluconeogenesis.</text>
</comment>
<comment type="pathway">
    <text evidence="1">Carbohydrate degradation; glycolysis; D-glyceraldehyde 3-phosphate and glycerone phosphate from D-glucose: step 2/4.</text>
</comment>
<comment type="subcellular location">
    <subcellularLocation>
        <location evidence="1">Cytoplasm</location>
    </subcellularLocation>
</comment>
<comment type="similarity">
    <text evidence="1">Belongs to the GPI family.</text>
</comment>
<name>G6PI_CYAP4</name>
<evidence type="ECO:0000255" key="1">
    <source>
        <dbReference type="HAMAP-Rule" id="MF_00473"/>
    </source>
</evidence>
<reference key="1">
    <citation type="journal article" date="2011" name="MBio">
        <title>Novel metabolic attributes of the genus Cyanothece, comprising a group of unicellular nitrogen-fixing Cyanobacteria.</title>
        <authorList>
            <person name="Bandyopadhyay A."/>
            <person name="Elvitigala T."/>
            <person name="Welsh E."/>
            <person name="Stockel J."/>
            <person name="Liberton M."/>
            <person name="Min H."/>
            <person name="Sherman L.A."/>
            <person name="Pakrasi H.B."/>
        </authorList>
    </citation>
    <scope>NUCLEOTIDE SEQUENCE [LARGE SCALE GENOMIC DNA]</scope>
    <source>
        <strain>PCC 7425 / ATCC 29141</strain>
    </source>
</reference>
<dbReference type="EC" id="5.3.1.9" evidence="1"/>
<dbReference type="EMBL" id="CP001344">
    <property type="protein sequence ID" value="ACL43134.1"/>
    <property type="molecule type" value="Genomic_DNA"/>
</dbReference>
<dbReference type="SMR" id="B8HVV6"/>
<dbReference type="STRING" id="395961.Cyan7425_0747"/>
<dbReference type="KEGG" id="cyn:Cyan7425_0747"/>
<dbReference type="eggNOG" id="COG0166">
    <property type="taxonomic scope" value="Bacteria"/>
</dbReference>
<dbReference type="HOGENOM" id="CLU_033288_0_0_3"/>
<dbReference type="OrthoDB" id="140919at2"/>
<dbReference type="UniPathway" id="UPA00109">
    <property type="reaction ID" value="UER00181"/>
</dbReference>
<dbReference type="UniPathway" id="UPA00138"/>
<dbReference type="GO" id="GO:0005829">
    <property type="term" value="C:cytosol"/>
    <property type="evidence" value="ECO:0007669"/>
    <property type="project" value="TreeGrafter"/>
</dbReference>
<dbReference type="GO" id="GO:0097367">
    <property type="term" value="F:carbohydrate derivative binding"/>
    <property type="evidence" value="ECO:0007669"/>
    <property type="project" value="InterPro"/>
</dbReference>
<dbReference type="GO" id="GO:0004347">
    <property type="term" value="F:glucose-6-phosphate isomerase activity"/>
    <property type="evidence" value="ECO:0007669"/>
    <property type="project" value="UniProtKB-UniRule"/>
</dbReference>
<dbReference type="GO" id="GO:0048029">
    <property type="term" value="F:monosaccharide binding"/>
    <property type="evidence" value="ECO:0007669"/>
    <property type="project" value="TreeGrafter"/>
</dbReference>
<dbReference type="GO" id="GO:0006094">
    <property type="term" value="P:gluconeogenesis"/>
    <property type="evidence" value="ECO:0007669"/>
    <property type="project" value="UniProtKB-UniRule"/>
</dbReference>
<dbReference type="GO" id="GO:0051156">
    <property type="term" value="P:glucose 6-phosphate metabolic process"/>
    <property type="evidence" value="ECO:0007669"/>
    <property type="project" value="TreeGrafter"/>
</dbReference>
<dbReference type="GO" id="GO:0006096">
    <property type="term" value="P:glycolytic process"/>
    <property type="evidence" value="ECO:0007669"/>
    <property type="project" value="UniProtKB-UniRule"/>
</dbReference>
<dbReference type="CDD" id="cd05015">
    <property type="entry name" value="SIS_PGI_1"/>
    <property type="match status" value="1"/>
</dbReference>
<dbReference type="CDD" id="cd05016">
    <property type="entry name" value="SIS_PGI_2"/>
    <property type="match status" value="1"/>
</dbReference>
<dbReference type="FunFam" id="3.40.50.10490:FF:000021">
    <property type="entry name" value="Glucose-6-phosphate isomerase"/>
    <property type="match status" value="1"/>
</dbReference>
<dbReference type="FunFam" id="3.40.50.10490:FF:000023">
    <property type="entry name" value="Glucose-6-phosphate isomerase"/>
    <property type="match status" value="1"/>
</dbReference>
<dbReference type="Gene3D" id="3.40.50.10490">
    <property type="entry name" value="Glucose-6-phosphate isomerase like protein, domain 1"/>
    <property type="match status" value="2"/>
</dbReference>
<dbReference type="HAMAP" id="MF_00473">
    <property type="entry name" value="G6P_isomerase"/>
    <property type="match status" value="1"/>
</dbReference>
<dbReference type="InterPro" id="IPR001672">
    <property type="entry name" value="G6P_Isomerase"/>
</dbReference>
<dbReference type="InterPro" id="IPR018189">
    <property type="entry name" value="Phosphoglucose_isomerase_CS"/>
</dbReference>
<dbReference type="InterPro" id="IPR046348">
    <property type="entry name" value="SIS_dom_sf"/>
</dbReference>
<dbReference type="InterPro" id="IPR035476">
    <property type="entry name" value="SIS_PGI_1"/>
</dbReference>
<dbReference type="InterPro" id="IPR035482">
    <property type="entry name" value="SIS_PGI_2"/>
</dbReference>
<dbReference type="NCBIfam" id="NF010696">
    <property type="entry name" value="PRK14096.1"/>
    <property type="match status" value="1"/>
</dbReference>
<dbReference type="PANTHER" id="PTHR11469">
    <property type="entry name" value="GLUCOSE-6-PHOSPHATE ISOMERASE"/>
    <property type="match status" value="1"/>
</dbReference>
<dbReference type="PANTHER" id="PTHR11469:SF1">
    <property type="entry name" value="GLUCOSE-6-PHOSPHATE ISOMERASE"/>
    <property type="match status" value="1"/>
</dbReference>
<dbReference type="Pfam" id="PF00342">
    <property type="entry name" value="PGI"/>
    <property type="match status" value="2"/>
</dbReference>
<dbReference type="PRINTS" id="PR00662">
    <property type="entry name" value="G6PISOMERASE"/>
</dbReference>
<dbReference type="SUPFAM" id="SSF53697">
    <property type="entry name" value="SIS domain"/>
    <property type="match status" value="1"/>
</dbReference>
<dbReference type="PROSITE" id="PS00174">
    <property type="entry name" value="P_GLUCOSE_ISOMERASE_2"/>
    <property type="match status" value="1"/>
</dbReference>
<dbReference type="PROSITE" id="PS51463">
    <property type="entry name" value="P_GLUCOSE_ISOMERASE_3"/>
    <property type="match status" value="1"/>
</dbReference>
<accession>B8HVV6</accession>
<gene>
    <name evidence="1" type="primary">pgi</name>
    <name type="ordered locus">Cyan7425_0747</name>
</gene>
<keyword id="KW-0963">Cytoplasm</keyword>
<keyword id="KW-0312">Gluconeogenesis</keyword>
<keyword id="KW-0324">Glycolysis</keyword>
<keyword id="KW-0413">Isomerase</keyword>
<protein>
    <recommendedName>
        <fullName evidence="1">Glucose-6-phosphate isomerase</fullName>
        <shortName evidence="1">GPI</shortName>
        <ecNumber evidence="1">5.3.1.9</ecNumber>
    </recommendedName>
    <alternativeName>
        <fullName evidence="1">Phosphoglucose isomerase</fullName>
        <shortName evidence="1">PGI</shortName>
    </alternativeName>
    <alternativeName>
        <fullName evidence="1">Phosphohexose isomerase</fullName>
        <shortName evidence="1">PHI</shortName>
    </alternativeName>
</protein>